<organism>
    <name type="scientific">Staphylococcus aureus (strain 04-02981)</name>
    <dbReference type="NCBI Taxonomy" id="703339"/>
    <lineage>
        <taxon>Bacteria</taxon>
        <taxon>Bacillati</taxon>
        <taxon>Bacillota</taxon>
        <taxon>Bacilli</taxon>
        <taxon>Bacillales</taxon>
        <taxon>Staphylococcaceae</taxon>
        <taxon>Staphylococcus</taxon>
    </lineage>
</organism>
<keyword id="KW-1003">Cell membrane</keyword>
<keyword id="KW-0472">Membrane</keyword>
<keyword id="KW-0812">Transmembrane</keyword>
<keyword id="KW-1133">Transmembrane helix</keyword>
<keyword id="KW-0813">Transport</keyword>
<name>ECFT_STAA4</name>
<gene>
    <name evidence="1" type="primary">ecfT</name>
    <name type="ordered locus">SA2981_2158</name>
</gene>
<sequence>MKNKLIIGRYLPINSFVHHLDPRAKLMFVFLFIILIFFCHSPLTYLWVFALILFIMRLAKIQLWFLIKGLTPIFFFLIFTLMMHIFLTKGGYVLVEWHGITIETNGILEGLYISLRLIGIVMIATIMTLSTSPIDLTDAFERLLAPLKMFKLPVHQLSMIMSIALRFIPTLMDELDKIILAQKSRGSEISSGNIATRIKSFIPLLVPLFISAFQRAEELAVAMEVRGYDANVKRTSYRQLKWQLRDTISLTMIIPIAIILFVLKYSGV</sequence>
<reference key="1">
    <citation type="journal article" date="2010" name="PLoS Pathog.">
        <title>A timescale for evolution, population expansion, and spatial spread of an emerging clone of methicillin-resistant Staphylococcus aureus.</title>
        <authorList>
            <person name="Nubel U."/>
            <person name="Dordel J."/>
            <person name="Kurt K."/>
            <person name="Strommenger B."/>
            <person name="Westh H."/>
            <person name="Shukla S.K."/>
            <person name="Zemlickova H."/>
            <person name="Leblois R."/>
            <person name="Wirth T."/>
            <person name="Jombart T."/>
            <person name="Balloux F."/>
            <person name="Witte W."/>
        </authorList>
    </citation>
    <scope>NUCLEOTIDE SEQUENCE [LARGE SCALE GENOMIC DNA]</scope>
    <source>
        <strain>04-02981</strain>
    </source>
</reference>
<comment type="function">
    <text evidence="1">Transmembrane (T) component of an energy-coupling factor (ECF) ABC-transporter complex. Unlike classic ABC transporters this ECF transporter provides the energy necessary to transport a number of different substrates.</text>
</comment>
<comment type="subunit">
    <text evidence="1">Forms a stable energy-coupling factor (ECF) transporter complex composed of 2 membrane-embedded substrate-binding proteins (S component), 2 ATP-binding proteins (A component) and 2 transmembrane proteins (T component). May be able to interact with more than 1 S component at a time (By similarity).</text>
</comment>
<comment type="subcellular location">
    <subcellularLocation>
        <location evidence="1">Cell membrane</location>
        <topology evidence="1">Multi-pass membrane protein</topology>
    </subcellularLocation>
</comment>
<comment type="similarity">
    <text evidence="1">Belongs to the energy-coupling factor EcfT family.</text>
</comment>
<feature type="chain" id="PRO_0000409000" description="Energy-coupling factor transporter transmembrane protein EcfT">
    <location>
        <begin position="1"/>
        <end position="268"/>
    </location>
</feature>
<feature type="transmembrane region" description="Helical" evidence="1">
    <location>
        <begin position="28"/>
        <end position="48"/>
    </location>
</feature>
<feature type="transmembrane region" description="Helical" evidence="1">
    <location>
        <begin position="63"/>
        <end position="83"/>
    </location>
</feature>
<feature type="transmembrane region" description="Helical" evidence="1">
    <location>
        <begin position="107"/>
        <end position="127"/>
    </location>
</feature>
<feature type="transmembrane region" description="Helical" evidence="1">
    <location>
        <begin position="152"/>
        <end position="172"/>
    </location>
</feature>
<feature type="transmembrane region" description="Helical" evidence="1">
    <location>
        <begin position="248"/>
        <end position="268"/>
    </location>
</feature>
<dbReference type="EMBL" id="CP001844">
    <property type="protein sequence ID" value="ADC38369.1"/>
    <property type="molecule type" value="Genomic_DNA"/>
</dbReference>
<dbReference type="RefSeq" id="WP_000791620.1">
    <property type="nucleotide sequence ID" value="NC_017340.1"/>
</dbReference>
<dbReference type="SMR" id="D3ERJ1"/>
<dbReference type="KEGG" id="suy:SA2981_2158"/>
<dbReference type="PATRIC" id="fig|703339.3.peg.2201"/>
<dbReference type="HOGENOM" id="CLU_056469_2_2_9"/>
<dbReference type="GO" id="GO:0005886">
    <property type="term" value="C:plasma membrane"/>
    <property type="evidence" value="ECO:0007669"/>
    <property type="project" value="UniProtKB-SubCell"/>
</dbReference>
<dbReference type="GO" id="GO:0022857">
    <property type="term" value="F:transmembrane transporter activity"/>
    <property type="evidence" value="ECO:0007669"/>
    <property type="project" value="UniProtKB-UniRule"/>
</dbReference>
<dbReference type="CDD" id="cd16914">
    <property type="entry name" value="EcfT"/>
    <property type="match status" value="1"/>
</dbReference>
<dbReference type="HAMAP" id="MF_01461">
    <property type="entry name" value="EcfT"/>
    <property type="match status" value="1"/>
</dbReference>
<dbReference type="InterPro" id="IPR003339">
    <property type="entry name" value="ABC/ECF_trnsptr_transmembrane"/>
</dbReference>
<dbReference type="InterPro" id="IPR024919">
    <property type="entry name" value="EcfT"/>
</dbReference>
<dbReference type="PANTHER" id="PTHR33514">
    <property type="entry name" value="PROTEIN ABCI12, CHLOROPLASTIC"/>
    <property type="match status" value="1"/>
</dbReference>
<dbReference type="PANTHER" id="PTHR33514:SF13">
    <property type="entry name" value="PROTEIN ABCI12, CHLOROPLASTIC"/>
    <property type="match status" value="1"/>
</dbReference>
<dbReference type="Pfam" id="PF02361">
    <property type="entry name" value="CbiQ"/>
    <property type="match status" value="1"/>
</dbReference>
<accession>D3ERJ1</accession>
<evidence type="ECO:0000255" key="1">
    <source>
        <dbReference type="HAMAP-Rule" id="MF_01461"/>
    </source>
</evidence>
<proteinExistence type="inferred from homology"/>
<protein>
    <recommendedName>
        <fullName evidence="1">Energy-coupling factor transporter transmembrane protein EcfT</fullName>
        <shortName evidence="1">ECF transporter T component EcfT</shortName>
    </recommendedName>
</protein>